<protein>
    <recommendedName>
        <fullName evidence="1">Large ribosomal subunit protein bL34</fullName>
    </recommendedName>
    <alternativeName>
        <fullName evidence="2">50S ribosomal protein L34</fullName>
    </alternativeName>
</protein>
<keyword id="KW-0687">Ribonucleoprotein</keyword>
<keyword id="KW-0689">Ribosomal protein</keyword>
<evidence type="ECO:0000255" key="1">
    <source>
        <dbReference type="HAMAP-Rule" id="MF_00391"/>
    </source>
</evidence>
<evidence type="ECO:0000305" key="2"/>
<accession>Q6FZ18</accession>
<name>RL34_BARQU</name>
<dbReference type="EMBL" id="BX897700">
    <property type="protein sequence ID" value="CAF26452.1"/>
    <property type="molecule type" value="Genomic_DNA"/>
</dbReference>
<dbReference type="RefSeq" id="WP_005864709.1">
    <property type="nucleotide sequence ID" value="NC_005955.1"/>
</dbReference>
<dbReference type="SMR" id="Q6FZ18"/>
<dbReference type="GeneID" id="71061799"/>
<dbReference type="KEGG" id="bqu:BQ09760"/>
<dbReference type="eggNOG" id="COG0230">
    <property type="taxonomic scope" value="Bacteria"/>
</dbReference>
<dbReference type="HOGENOM" id="CLU_129938_2_0_5"/>
<dbReference type="OrthoDB" id="9804164at2"/>
<dbReference type="Proteomes" id="UP000000597">
    <property type="component" value="Chromosome"/>
</dbReference>
<dbReference type="GO" id="GO:1990904">
    <property type="term" value="C:ribonucleoprotein complex"/>
    <property type="evidence" value="ECO:0007669"/>
    <property type="project" value="UniProtKB-KW"/>
</dbReference>
<dbReference type="GO" id="GO:0005840">
    <property type="term" value="C:ribosome"/>
    <property type="evidence" value="ECO:0007669"/>
    <property type="project" value="UniProtKB-KW"/>
</dbReference>
<dbReference type="GO" id="GO:0003735">
    <property type="term" value="F:structural constituent of ribosome"/>
    <property type="evidence" value="ECO:0007669"/>
    <property type="project" value="InterPro"/>
</dbReference>
<dbReference type="GO" id="GO:0006412">
    <property type="term" value="P:translation"/>
    <property type="evidence" value="ECO:0007669"/>
    <property type="project" value="UniProtKB-UniRule"/>
</dbReference>
<dbReference type="FunFam" id="1.10.287.3980:FF:000001">
    <property type="entry name" value="Mitochondrial ribosomal protein L34"/>
    <property type="match status" value="1"/>
</dbReference>
<dbReference type="Gene3D" id="1.10.287.3980">
    <property type="match status" value="1"/>
</dbReference>
<dbReference type="HAMAP" id="MF_00391">
    <property type="entry name" value="Ribosomal_bL34"/>
    <property type="match status" value="1"/>
</dbReference>
<dbReference type="InterPro" id="IPR000271">
    <property type="entry name" value="Ribosomal_bL34"/>
</dbReference>
<dbReference type="InterPro" id="IPR020939">
    <property type="entry name" value="Ribosomal_bL34_CS"/>
</dbReference>
<dbReference type="NCBIfam" id="TIGR01030">
    <property type="entry name" value="rpmH_bact"/>
    <property type="match status" value="1"/>
</dbReference>
<dbReference type="PANTHER" id="PTHR14503:SF4">
    <property type="entry name" value="LARGE RIBOSOMAL SUBUNIT PROTEIN BL34M"/>
    <property type="match status" value="1"/>
</dbReference>
<dbReference type="PANTHER" id="PTHR14503">
    <property type="entry name" value="MITOCHONDRIAL RIBOSOMAL PROTEIN 34 FAMILY MEMBER"/>
    <property type="match status" value="1"/>
</dbReference>
<dbReference type="Pfam" id="PF00468">
    <property type="entry name" value="Ribosomal_L34"/>
    <property type="match status" value="1"/>
</dbReference>
<dbReference type="PROSITE" id="PS00784">
    <property type="entry name" value="RIBOSOMAL_L34"/>
    <property type="match status" value="1"/>
</dbReference>
<comment type="similarity">
    <text evidence="1">Belongs to the bacterial ribosomal protein bL34 family.</text>
</comment>
<gene>
    <name evidence="1" type="primary">rpmH</name>
    <name type="ordered locus">BQ09760</name>
</gene>
<organism>
    <name type="scientific">Bartonella quintana (strain Toulouse)</name>
    <name type="common">Rochalimaea quintana</name>
    <dbReference type="NCBI Taxonomy" id="283165"/>
    <lineage>
        <taxon>Bacteria</taxon>
        <taxon>Pseudomonadati</taxon>
        <taxon>Pseudomonadota</taxon>
        <taxon>Alphaproteobacteria</taxon>
        <taxon>Hyphomicrobiales</taxon>
        <taxon>Bartonellaceae</taxon>
        <taxon>Bartonella</taxon>
    </lineage>
</organism>
<feature type="chain" id="PRO_0000187344" description="Large ribosomal subunit protein bL34">
    <location>
        <begin position="1"/>
        <end position="44"/>
    </location>
</feature>
<proteinExistence type="inferred from homology"/>
<sequence length="44" mass="5108">MKRTYQPSKLVRKRRHGFRARMATAGGRKVIAARRARGRKRLSA</sequence>
<reference key="1">
    <citation type="journal article" date="2004" name="Proc. Natl. Acad. Sci. U.S.A.">
        <title>The louse-borne human pathogen Bartonella quintana is a genomic derivative of the zoonotic agent Bartonella henselae.</title>
        <authorList>
            <person name="Alsmark U.C.M."/>
            <person name="Frank A.C."/>
            <person name="Karlberg E.O."/>
            <person name="Legault B.-A."/>
            <person name="Ardell D.H."/>
            <person name="Canbaeck B."/>
            <person name="Eriksson A.-S."/>
            <person name="Naeslund A.K."/>
            <person name="Handley S.A."/>
            <person name="Huvet M."/>
            <person name="La Scola B."/>
            <person name="Holmberg M."/>
            <person name="Andersson S.G.E."/>
        </authorList>
    </citation>
    <scope>NUCLEOTIDE SEQUENCE [LARGE SCALE GENOMIC DNA]</scope>
    <source>
        <strain>Toulouse</strain>
    </source>
</reference>